<dbReference type="EMBL" id="AF001422">
    <property type="protein sequence ID" value="AAC01948.1"/>
    <property type="status" value="ALT_SEQ"/>
    <property type="molecule type" value="mRNA"/>
</dbReference>
<dbReference type="EMBL" id="AF001536">
    <property type="protein sequence ID" value="AAC01949.1"/>
    <property type="molecule type" value="mRNA"/>
</dbReference>
<dbReference type="EMBL" id="AF001625">
    <property type="protein sequence ID" value="AAC47757.1"/>
    <property type="molecule type" value="mRNA"/>
</dbReference>
<dbReference type="EMBL" id="AF001626">
    <property type="protein sequence ID" value="AAC47758.1"/>
    <property type="status" value="ALT_FRAME"/>
    <property type="molecule type" value="mRNA"/>
</dbReference>
<dbReference type="EMBL" id="AE013599">
    <property type="protein sequence ID" value="AAO41357.1"/>
    <property type="molecule type" value="Genomic_DNA"/>
</dbReference>
<dbReference type="EMBL" id="AE013599">
    <property type="protein sequence ID" value="AAO41358.1"/>
    <property type="molecule type" value="Genomic_DNA"/>
</dbReference>
<dbReference type="EMBL" id="AE013599">
    <property type="protein sequence ID" value="AAO41359.1"/>
    <property type="molecule type" value="Genomic_DNA"/>
</dbReference>
<dbReference type="RefSeq" id="NP_788390.1">
    <molecule id="O16011-3"/>
    <property type="nucleotide sequence ID" value="NM_176210.2"/>
</dbReference>
<dbReference type="RefSeq" id="NP_788391.1">
    <molecule id="O16011-1"/>
    <property type="nucleotide sequence ID" value="NM_176211.2"/>
</dbReference>
<dbReference type="RefSeq" id="NP_788392.1">
    <molecule id="O16011-2"/>
    <property type="nucleotide sequence ID" value="NM_176212.2"/>
</dbReference>
<dbReference type="SMR" id="O16011"/>
<dbReference type="BioGRID" id="62642">
    <property type="interactions" value="62"/>
</dbReference>
<dbReference type="DIP" id="DIP-17614N"/>
<dbReference type="FunCoup" id="O16011">
    <property type="interactions" value="93"/>
</dbReference>
<dbReference type="IntAct" id="O16011">
    <property type="interactions" value="19"/>
</dbReference>
<dbReference type="STRING" id="7227.FBpp0307871"/>
<dbReference type="PaxDb" id="7227-FBpp0297556"/>
<dbReference type="EnsemblMetazoa" id="FBtr0086991">
    <molecule id="O16011-2"/>
    <property type="protein sequence ID" value="FBpp0086143"/>
    <property type="gene ID" value="FBgn0265487"/>
</dbReference>
<dbReference type="EnsemblMetazoa" id="FBtr0086992">
    <molecule id="O16011-1"/>
    <property type="protein sequence ID" value="FBpp0086144"/>
    <property type="gene ID" value="FBgn0265487"/>
</dbReference>
<dbReference type="EnsemblMetazoa" id="FBtr0086994">
    <molecule id="O16011-3"/>
    <property type="protein sequence ID" value="FBpp0086146"/>
    <property type="gene ID" value="FBgn0265487"/>
</dbReference>
<dbReference type="GeneID" id="36945"/>
<dbReference type="KEGG" id="dme:Dmel_CG33197"/>
<dbReference type="UCSC" id="CG33197-RA">
    <molecule id="O16011-1"/>
    <property type="organism name" value="d. melanogaster"/>
</dbReference>
<dbReference type="AGR" id="FB:FBgn0265487"/>
<dbReference type="CTD" id="36945"/>
<dbReference type="FlyBase" id="FBgn0265487">
    <property type="gene designation" value="mbl"/>
</dbReference>
<dbReference type="VEuPathDB" id="VectorBase:FBgn0265487"/>
<dbReference type="eggNOG" id="KOG2494">
    <property type="taxonomic scope" value="Eukaryota"/>
</dbReference>
<dbReference type="GeneTree" id="ENSGT00950000182897"/>
<dbReference type="HOGENOM" id="CLU_937717_0_0_1"/>
<dbReference type="InParanoid" id="O16011"/>
<dbReference type="OrthoDB" id="6285980at2759"/>
<dbReference type="PhylomeDB" id="O16011"/>
<dbReference type="BioGRID-ORCS" id="36945">
    <property type="hits" value="0 hits in 3 CRISPR screens"/>
</dbReference>
<dbReference type="ChiTaRS" id="mbl">
    <property type="organism name" value="fly"/>
</dbReference>
<dbReference type="GenomeRNAi" id="36945"/>
<dbReference type="PRO" id="PR:O16011"/>
<dbReference type="Proteomes" id="UP000000803">
    <property type="component" value="Chromosome 2R"/>
</dbReference>
<dbReference type="Bgee" id="FBgn0265487">
    <property type="expression patterns" value="Expressed in gustatory receptor neuron (Drosophila) in insect leg and 273 other cell types or tissues"/>
</dbReference>
<dbReference type="ExpressionAtlas" id="O16011">
    <property type="expression patterns" value="baseline and differential"/>
</dbReference>
<dbReference type="GO" id="GO:0005737">
    <property type="term" value="C:cytoplasm"/>
    <property type="evidence" value="ECO:0000314"/>
    <property type="project" value="FlyBase"/>
</dbReference>
<dbReference type="GO" id="GO:0031673">
    <property type="term" value="C:H zone"/>
    <property type="evidence" value="ECO:0000314"/>
    <property type="project" value="FlyBase"/>
</dbReference>
<dbReference type="GO" id="GO:0005654">
    <property type="term" value="C:nucleoplasm"/>
    <property type="evidence" value="ECO:0000318"/>
    <property type="project" value="GO_Central"/>
</dbReference>
<dbReference type="GO" id="GO:0005634">
    <property type="term" value="C:nucleus"/>
    <property type="evidence" value="ECO:0000314"/>
    <property type="project" value="UniProtKB"/>
</dbReference>
<dbReference type="GO" id="GO:0048471">
    <property type="term" value="C:perinuclear region of cytoplasm"/>
    <property type="evidence" value="ECO:0000314"/>
    <property type="project" value="FlyBase"/>
</dbReference>
<dbReference type="GO" id="GO:0030018">
    <property type="term" value="C:Z disc"/>
    <property type="evidence" value="ECO:0000314"/>
    <property type="project" value="FlyBase"/>
</dbReference>
<dbReference type="GO" id="GO:0003676">
    <property type="term" value="F:nucleic acid binding"/>
    <property type="evidence" value="ECO:0000303"/>
    <property type="project" value="UniProtKB"/>
</dbReference>
<dbReference type="GO" id="GO:0003723">
    <property type="term" value="F:RNA binding"/>
    <property type="evidence" value="ECO:0000318"/>
    <property type="project" value="GO_Central"/>
</dbReference>
<dbReference type="GO" id="GO:0008270">
    <property type="term" value="F:zinc ion binding"/>
    <property type="evidence" value="ECO:0007669"/>
    <property type="project" value="UniProtKB-KW"/>
</dbReference>
<dbReference type="GO" id="GO:0006915">
    <property type="term" value="P:apoptotic process"/>
    <property type="evidence" value="ECO:0000314"/>
    <property type="project" value="FlyBase"/>
</dbReference>
<dbReference type="GO" id="GO:0001751">
    <property type="term" value="P:compound eye photoreceptor cell differentiation"/>
    <property type="evidence" value="ECO:0000315"/>
    <property type="project" value="FlyBase"/>
</dbReference>
<dbReference type="GO" id="GO:0001654">
    <property type="term" value="P:eye development"/>
    <property type="evidence" value="ECO:0000315"/>
    <property type="project" value="FlyBase"/>
</dbReference>
<dbReference type="GO" id="GO:0046716">
    <property type="term" value="P:muscle cell cellular homeostasis"/>
    <property type="evidence" value="ECO:0000315"/>
    <property type="project" value="FlyBase"/>
</dbReference>
<dbReference type="GO" id="GO:0007517">
    <property type="term" value="P:muscle organ development"/>
    <property type="evidence" value="ECO:0000315"/>
    <property type="project" value="UniProtKB"/>
</dbReference>
<dbReference type="GO" id="GO:0000381">
    <property type="term" value="P:regulation of alternative mRNA splicing, via spliceosome"/>
    <property type="evidence" value="ECO:0000315"/>
    <property type="project" value="FlyBase"/>
</dbReference>
<dbReference type="GO" id="GO:0045924">
    <property type="term" value="P:regulation of female receptivity"/>
    <property type="evidence" value="ECO:0000315"/>
    <property type="project" value="FlyBase"/>
</dbReference>
<dbReference type="GO" id="GO:0010468">
    <property type="term" value="P:regulation of gene expression"/>
    <property type="evidence" value="ECO:0000315"/>
    <property type="project" value="FlyBase"/>
</dbReference>
<dbReference type="GO" id="GO:0043484">
    <property type="term" value="P:regulation of RNA splicing"/>
    <property type="evidence" value="ECO:0000318"/>
    <property type="project" value="GO_Central"/>
</dbReference>
<dbReference type="GO" id="GO:0042052">
    <property type="term" value="P:rhabdomere development"/>
    <property type="evidence" value="ECO:0000315"/>
    <property type="project" value="FlyBase"/>
</dbReference>
<dbReference type="GO" id="GO:0007601">
    <property type="term" value="P:visual perception"/>
    <property type="evidence" value="ECO:0007669"/>
    <property type="project" value="UniProtKB-KW"/>
</dbReference>
<dbReference type="FunFam" id="3.30.1370.210:FF:000005">
    <property type="entry name" value="Muscleblind, isoform M"/>
    <property type="match status" value="1"/>
</dbReference>
<dbReference type="Gene3D" id="3.30.1370.210">
    <property type="match status" value="1"/>
</dbReference>
<dbReference type="InterPro" id="IPR054429">
    <property type="entry name" value="Znf-CCCH_Muscleblind-like"/>
</dbReference>
<dbReference type="InterPro" id="IPR000571">
    <property type="entry name" value="Znf_CCCH"/>
</dbReference>
<dbReference type="PANTHER" id="PTHR12675">
    <property type="entry name" value="MUSCLEBLIND-LIKE PROTEIN"/>
    <property type="match status" value="1"/>
</dbReference>
<dbReference type="PANTHER" id="PTHR12675:SF12">
    <property type="entry name" value="PROTEIN MUSCLEBLIND"/>
    <property type="match status" value="1"/>
</dbReference>
<dbReference type="Pfam" id="PF22628">
    <property type="entry name" value="zf-CCCH_10"/>
    <property type="match status" value="1"/>
</dbReference>
<dbReference type="SMART" id="SM00356">
    <property type="entry name" value="ZnF_C3H1"/>
    <property type="match status" value="2"/>
</dbReference>
<dbReference type="PROSITE" id="PS50103">
    <property type="entry name" value="ZF_C3H1"/>
    <property type="match status" value="2"/>
</dbReference>
<feature type="chain" id="PRO_0000089177" description="Protein muscleblind">
    <location>
        <begin position="1"/>
        <end position="297"/>
    </location>
</feature>
<feature type="zinc finger region" description="C3H1-type 1" evidence="1">
    <location>
        <begin position="18"/>
        <end position="46"/>
    </location>
</feature>
<feature type="zinc finger region" description="C3H1-type 2" evidence="1">
    <location>
        <begin position="52"/>
        <end position="80"/>
    </location>
</feature>
<feature type="splice variant" id="VSP_006427" description="In isoform D." evidence="3">
    <original>TSPLAAHHHQQQQQLQHQLNNINNNNNHSTAGAAATSTTATTTTNNAAAAAAAAAAAAAAAVMG</original>
    <variation>MDVKTVGSFYYDNFQFSGMVPFKRPAAEKSGIPVYQPGATAYQQLMQPYVPVSFTGHPPGVPRF</variation>
    <location>
        <begin position="180"/>
        <end position="243"/>
    </location>
</feature>
<feature type="splice variant" id="VSP_006425" description="In isoform A." evidence="3">
    <original>TSPLAAHHHQQQQQLQHQLNNINN</original>
    <variation>VSFGLMPTTIYISRYMFMYPMKSI</variation>
    <location>
        <begin position="180"/>
        <end position="203"/>
    </location>
</feature>
<feature type="splice variant" id="VSP_006426" description="In isoform A." evidence="3">
    <location>
        <begin position="204"/>
        <end position="297"/>
    </location>
</feature>
<feature type="splice variant" id="VSP_006428" description="In isoform D." evidence="3">
    <location>
        <begin position="244"/>
        <end position="297"/>
    </location>
</feature>
<feature type="sequence conflict" description="In Ref. 1; AAC01948." evidence="4" ref="1">
    <original>S</original>
    <variation>W</variation>
    <location>
        <position position="16"/>
    </location>
</feature>
<feature type="sequence conflict" description="In Ref. 1; AAC47758." evidence="4" ref="1">
    <location>
        <position position="189"/>
    </location>
</feature>
<accession>O16011</accession>
<accession>O16008</accession>
<accession>O16009</accession>
<accession>O16010</accession>
<accession>Q86BE8</accession>
<accession>Q9V803</accession>
<accession>Q9V804</accession>
<gene>
    <name type="primary">mbl</name>
    <name type="synonym">mm</name>
    <name type="ORF">CG33197</name>
</gene>
<proteinExistence type="evidence at transcript level"/>
<comment type="function">
    <text evidence="2">Required for terminal differentiation of photoreceptor cells. Vital for embryonic development.</text>
</comment>
<comment type="subcellular location">
    <subcellularLocation>
        <location evidence="2">Nucleus</location>
    </subcellularLocation>
</comment>
<comment type="alternative products">
    <event type="alternative splicing"/>
    <isoform>
        <id>O16011-1</id>
        <name>B</name>
        <sequence type="displayed"/>
    </isoform>
    <isoform>
        <id>O16011-2</id>
        <name>A</name>
        <sequence type="described" ref="VSP_006425 VSP_006426"/>
    </isoform>
    <isoform>
        <id>O16011-3</id>
        <name>D</name>
        <name>Begemann-D</name>
        <sequence type="described" ref="VSP_006427 VSP_006428"/>
    </isoform>
    <text>Additional isoforms seem to exist.</text>
</comment>
<comment type="tissue specificity">
    <text evidence="2">Expressed in embryonic muscle cells.</text>
</comment>
<comment type="similarity">
    <text evidence="4">Belongs to the muscleblind family.</text>
</comment>
<comment type="sequence caution" evidence="4">
    <conflict type="miscellaneous discrepancy">
        <sequence resource="EMBL-CDS" id="AAC01948"/>
    </conflict>
    <text>Aberrant splicing.</text>
</comment>
<comment type="sequence caution" evidence="4">
    <conflict type="frameshift">
        <sequence resource="EMBL-CDS" id="AAC47758"/>
    </conflict>
</comment>
<keyword id="KW-0025">Alternative splicing</keyword>
<keyword id="KW-0217">Developmental protein</keyword>
<keyword id="KW-0479">Metal-binding</keyword>
<keyword id="KW-0539">Nucleus</keyword>
<keyword id="KW-1185">Reference proteome</keyword>
<keyword id="KW-0677">Repeat</keyword>
<keyword id="KW-0716">Sensory transduction</keyword>
<keyword id="KW-0844">Vision</keyword>
<keyword id="KW-0862">Zinc</keyword>
<keyword id="KW-0863">Zinc-finger</keyword>
<evidence type="ECO:0000255" key="1">
    <source>
        <dbReference type="PROSITE-ProRule" id="PRU00723"/>
    </source>
</evidence>
<evidence type="ECO:0000269" key="2">
    <source>
    </source>
</evidence>
<evidence type="ECO:0000303" key="3">
    <source>
    </source>
</evidence>
<evidence type="ECO:0000305" key="4"/>
<name>MBL_DROME</name>
<reference key="1">
    <citation type="journal article" date="1997" name="Development">
        <title>Muscleblind, a gene required for photoreceptor differentiation in Drosophila, encodes novel nuclear Cys3His-type zinc-finger-containing proteins.</title>
        <authorList>
            <person name="Begemann G."/>
            <person name="Paricio N."/>
            <person name="Artero R."/>
            <person name="Kiss I."/>
            <person name="Perez-Alonso M."/>
            <person name="Mlodzik M."/>
        </authorList>
    </citation>
    <scope>NUCLEOTIDE SEQUENCE [MRNA] (ISOFORMS A; B AND D)</scope>
    <scope>FUNCTION</scope>
    <scope>SUBCELLULAR LOCATION</scope>
    <scope>TISSUE SPECIFICITY</scope>
    <source>
        <strain>Oregon-R</strain>
        <tissue>Imaginal disk</tissue>
    </source>
</reference>
<reference key="2">
    <citation type="journal article" date="2000" name="Science">
        <title>The genome sequence of Drosophila melanogaster.</title>
        <authorList>
            <person name="Adams M.D."/>
            <person name="Celniker S.E."/>
            <person name="Holt R.A."/>
            <person name="Evans C.A."/>
            <person name="Gocayne J.D."/>
            <person name="Amanatides P.G."/>
            <person name="Scherer S.E."/>
            <person name="Li P.W."/>
            <person name="Hoskins R.A."/>
            <person name="Galle R.F."/>
            <person name="George R.A."/>
            <person name="Lewis S.E."/>
            <person name="Richards S."/>
            <person name="Ashburner M."/>
            <person name="Henderson S.N."/>
            <person name="Sutton G.G."/>
            <person name="Wortman J.R."/>
            <person name="Yandell M.D."/>
            <person name="Zhang Q."/>
            <person name="Chen L.X."/>
            <person name="Brandon R.C."/>
            <person name="Rogers Y.-H.C."/>
            <person name="Blazej R.G."/>
            <person name="Champe M."/>
            <person name="Pfeiffer B.D."/>
            <person name="Wan K.H."/>
            <person name="Doyle C."/>
            <person name="Baxter E.G."/>
            <person name="Helt G."/>
            <person name="Nelson C.R."/>
            <person name="Miklos G.L.G."/>
            <person name="Abril J.F."/>
            <person name="Agbayani A."/>
            <person name="An H.-J."/>
            <person name="Andrews-Pfannkoch C."/>
            <person name="Baldwin D."/>
            <person name="Ballew R.M."/>
            <person name="Basu A."/>
            <person name="Baxendale J."/>
            <person name="Bayraktaroglu L."/>
            <person name="Beasley E.M."/>
            <person name="Beeson K.Y."/>
            <person name="Benos P.V."/>
            <person name="Berman B.P."/>
            <person name="Bhandari D."/>
            <person name="Bolshakov S."/>
            <person name="Borkova D."/>
            <person name="Botchan M.R."/>
            <person name="Bouck J."/>
            <person name="Brokstein P."/>
            <person name="Brottier P."/>
            <person name="Burtis K.C."/>
            <person name="Busam D.A."/>
            <person name="Butler H."/>
            <person name="Cadieu E."/>
            <person name="Center A."/>
            <person name="Chandra I."/>
            <person name="Cherry J.M."/>
            <person name="Cawley S."/>
            <person name="Dahlke C."/>
            <person name="Davenport L.B."/>
            <person name="Davies P."/>
            <person name="de Pablos B."/>
            <person name="Delcher A."/>
            <person name="Deng Z."/>
            <person name="Mays A.D."/>
            <person name="Dew I."/>
            <person name="Dietz S.M."/>
            <person name="Dodson K."/>
            <person name="Doup L.E."/>
            <person name="Downes M."/>
            <person name="Dugan-Rocha S."/>
            <person name="Dunkov B.C."/>
            <person name="Dunn P."/>
            <person name="Durbin K.J."/>
            <person name="Evangelista C.C."/>
            <person name="Ferraz C."/>
            <person name="Ferriera S."/>
            <person name="Fleischmann W."/>
            <person name="Fosler C."/>
            <person name="Gabrielian A.E."/>
            <person name="Garg N.S."/>
            <person name="Gelbart W.M."/>
            <person name="Glasser K."/>
            <person name="Glodek A."/>
            <person name="Gong F."/>
            <person name="Gorrell J.H."/>
            <person name="Gu Z."/>
            <person name="Guan P."/>
            <person name="Harris M."/>
            <person name="Harris N.L."/>
            <person name="Harvey D.A."/>
            <person name="Heiman T.J."/>
            <person name="Hernandez J.R."/>
            <person name="Houck J."/>
            <person name="Hostin D."/>
            <person name="Houston K.A."/>
            <person name="Howland T.J."/>
            <person name="Wei M.-H."/>
            <person name="Ibegwam C."/>
            <person name="Jalali M."/>
            <person name="Kalush F."/>
            <person name="Karpen G.H."/>
            <person name="Ke Z."/>
            <person name="Kennison J.A."/>
            <person name="Ketchum K.A."/>
            <person name="Kimmel B.E."/>
            <person name="Kodira C.D."/>
            <person name="Kraft C.L."/>
            <person name="Kravitz S."/>
            <person name="Kulp D."/>
            <person name="Lai Z."/>
            <person name="Lasko P."/>
            <person name="Lei Y."/>
            <person name="Levitsky A.A."/>
            <person name="Li J.H."/>
            <person name="Li Z."/>
            <person name="Liang Y."/>
            <person name="Lin X."/>
            <person name="Liu X."/>
            <person name="Mattei B."/>
            <person name="McIntosh T.C."/>
            <person name="McLeod M.P."/>
            <person name="McPherson D."/>
            <person name="Merkulov G."/>
            <person name="Milshina N.V."/>
            <person name="Mobarry C."/>
            <person name="Morris J."/>
            <person name="Moshrefi A."/>
            <person name="Mount S.M."/>
            <person name="Moy M."/>
            <person name="Murphy B."/>
            <person name="Murphy L."/>
            <person name="Muzny D.M."/>
            <person name="Nelson D.L."/>
            <person name="Nelson D.R."/>
            <person name="Nelson K.A."/>
            <person name="Nixon K."/>
            <person name="Nusskern D.R."/>
            <person name="Pacleb J.M."/>
            <person name="Palazzolo M."/>
            <person name="Pittman G.S."/>
            <person name="Pan S."/>
            <person name="Pollard J."/>
            <person name="Puri V."/>
            <person name="Reese M.G."/>
            <person name="Reinert K."/>
            <person name="Remington K."/>
            <person name="Saunders R.D.C."/>
            <person name="Scheeler F."/>
            <person name="Shen H."/>
            <person name="Shue B.C."/>
            <person name="Siden-Kiamos I."/>
            <person name="Simpson M."/>
            <person name="Skupski M.P."/>
            <person name="Smith T.J."/>
            <person name="Spier E."/>
            <person name="Spradling A.C."/>
            <person name="Stapleton M."/>
            <person name="Strong R."/>
            <person name="Sun E."/>
            <person name="Svirskas R."/>
            <person name="Tector C."/>
            <person name="Turner R."/>
            <person name="Venter E."/>
            <person name="Wang A.H."/>
            <person name="Wang X."/>
            <person name="Wang Z.-Y."/>
            <person name="Wassarman D.A."/>
            <person name="Weinstock G.M."/>
            <person name="Weissenbach J."/>
            <person name="Williams S.M."/>
            <person name="Woodage T."/>
            <person name="Worley K.C."/>
            <person name="Wu D."/>
            <person name="Yang S."/>
            <person name="Yao Q.A."/>
            <person name="Ye J."/>
            <person name="Yeh R.-F."/>
            <person name="Zaveri J.S."/>
            <person name="Zhan M."/>
            <person name="Zhang G."/>
            <person name="Zhao Q."/>
            <person name="Zheng L."/>
            <person name="Zheng X.H."/>
            <person name="Zhong F.N."/>
            <person name="Zhong W."/>
            <person name="Zhou X."/>
            <person name="Zhu S.C."/>
            <person name="Zhu X."/>
            <person name="Smith H.O."/>
            <person name="Gibbs R.A."/>
            <person name="Myers E.W."/>
            <person name="Rubin G.M."/>
            <person name="Venter J.C."/>
        </authorList>
    </citation>
    <scope>NUCLEOTIDE SEQUENCE [LARGE SCALE GENOMIC DNA]</scope>
    <source>
        <strain>Berkeley</strain>
    </source>
</reference>
<reference key="3">
    <citation type="journal article" date="2002" name="Genome Biol.">
        <title>Annotation of the Drosophila melanogaster euchromatic genome: a systematic review.</title>
        <authorList>
            <person name="Misra S."/>
            <person name="Crosby M.A."/>
            <person name="Mungall C.J."/>
            <person name="Matthews B.B."/>
            <person name="Campbell K.S."/>
            <person name="Hradecky P."/>
            <person name="Huang Y."/>
            <person name="Kaminker J.S."/>
            <person name="Millburn G.H."/>
            <person name="Prochnik S.E."/>
            <person name="Smith C.D."/>
            <person name="Tupy J.L."/>
            <person name="Whitfield E.J."/>
            <person name="Bayraktaroglu L."/>
            <person name="Berman B.P."/>
            <person name="Bettencourt B.R."/>
            <person name="Celniker S.E."/>
            <person name="de Grey A.D.N.J."/>
            <person name="Drysdale R.A."/>
            <person name="Harris N.L."/>
            <person name="Richter J."/>
            <person name="Russo S."/>
            <person name="Schroeder A.J."/>
            <person name="Shu S.Q."/>
            <person name="Stapleton M."/>
            <person name="Yamada C."/>
            <person name="Ashburner M."/>
            <person name="Gelbart W.M."/>
            <person name="Rubin G.M."/>
            <person name="Lewis S.E."/>
        </authorList>
    </citation>
    <scope>GENOME REANNOTATION</scope>
    <scope>ALTERNATIVE SPLICING</scope>
    <source>
        <strain>Berkeley</strain>
    </source>
</reference>
<sequence>MANVVNMNSLLNGKDSRWLQLEVCREFQRNKCSRQDTECKFAHPPANVEVQNGKVTACYDSIKGRCNRDKPPCKYFHPPQHLKDQLLINGRNHLALKNALMQQMGIAPGQPVISGQVPAVATNPYLTGIPANSYSPYYTTGHLVPALLGPDPVTSQLGPVVPQTVQVAQQKIPRSDRLETSPLAAHHHQQQQQLQHQLNNINNNNNHSTAGAAATSTTATTTTNNAAAAAAAAAAAAAAAVMGHHTLEVGKKRAADTTDMFPLVFFCSFPSPCVFAFLNCSIFGFLRLWFSLFNLRH</sequence>
<protein>
    <recommendedName>
        <fullName>Protein muscleblind</fullName>
    </recommendedName>
    <alternativeName>
        <fullName>Protein mindmelt</fullName>
    </alternativeName>
</protein>
<organism>
    <name type="scientific">Drosophila melanogaster</name>
    <name type="common">Fruit fly</name>
    <dbReference type="NCBI Taxonomy" id="7227"/>
    <lineage>
        <taxon>Eukaryota</taxon>
        <taxon>Metazoa</taxon>
        <taxon>Ecdysozoa</taxon>
        <taxon>Arthropoda</taxon>
        <taxon>Hexapoda</taxon>
        <taxon>Insecta</taxon>
        <taxon>Pterygota</taxon>
        <taxon>Neoptera</taxon>
        <taxon>Endopterygota</taxon>
        <taxon>Diptera</taxon>
        <taxon>Brachycera</taxon>
        <taxon>Muscomorpha</taxon>
        <taxon>Ephydroidea</taxon>
        <taxon>Drosophilidae</taxon>
        <taxon>Drosophila</taxon>
        <taxon>Sophophora</taxon>
    </lineage>
</organism>